<gene>
    <name type="primary">rplJ</name>
    <name type="ordered locus">BU036</name>
</gene>
<evidence type="ECO:0000250" key="1"/>
<evidence type="ECO:0000305" key="2"/>
<name>RL10_BUCAI</name>
<organism>
    <name type="scientific">Buchnera aphidicola subsp. Acyrthosiphon pisum (strain APS)</name>
    <name type="common">Acyrthosiphon pisum symbiotic bacterium</name>
    <dbReference type="NCBI Taxonomy" id="107806"/>
    <lineage>
        <taxon>Bacteria</taxon>
        <taxon>Pseudomonadati</taxon>
        <taxon>Pseudomonadota</taxon>
        <taxon>Gammaproteobacteria</taxon>
        <taxon>Enterobacterales</taxon>
        <taxon>Erwiniaceae</taxon>
        <taxon>Buchnera</taxon>
    </lineage>
</organism>
<dbReference type="EMBL" id="BA000003">
    <property type="protein sequence ID" value="BAB12763.1"/>
    <property type="molecule type" value="Genomic_DNA"/>
</dbReference>
<dbReference type="RefSeq" id="NP_239877.1">
    <property type="nucleotide sequence ID" value="NC_002528.1"/>
</dbReference>
<dbReference type="RefSeq" id="WP_009873997.1">
    <property type="nucleotide sequence ID" value="NZ_AP036055.1"/>
</dbReference>
<dbReference type="STRING" id="563178.BUAP5A_035"/>
<dbReference type="EnsemblBacteria" id="BAB12763">
    <property type="protein sequence ID" value="BAB12763"/>
    <property type="gene ID" value="BAB12763"/>
</dbReference>
<dbReference type="KEGG" id="buc:BU036"/>
<dbReference type="PATRIC" id="fig|107806.10.peg.49"/>
<dbReference type="eggNOG" id="COG0244">
    <property type="taxonomic scope" value="Bacteria"/>
</dbReference>
<dbReference type="HOGENOM" id="CLU_092227_0_2_6"/>
<dbReference type="Proteomes" id="UP000001806">
    <property type="component" value="Chromosome"/>
</dbReference>
<dbReference type="GO" id="GO:0015934">
    <property type="term" value="C:large ribosomal subunit"/>
    <property type="evidence" value="ECO:0007669"/>
    <property type="project" value="InterPro"/>
</dbReference>
<dbReference type="GO" id="GO:0070180">
    <property type="term" value="F:large ribosomal subunit rRNA binding"/>
    <property type="evidence" value="ECO:0007669"/>
    <property type="project" value="UniProtKB-UniRule"/>
</dbReference>
<dbReference type="GO" id="GO:0003735">
    <property type="term" value="F:structural constituent of ribosome"/>
    <property type="evidence" value="ECO:0007669"/>
    <property type="project" value="InterPro"/>
</dbReference>
<dbReference type="GO" id="GO:0006412">
    <property type="term" value="P:translation"/>
    <property type="evidence" value="ECO:0007669"/>
    <property type="project" value="UniProtKB-UniRule"/>
</dbReference>
<dbReference type="CDD" id="cd05797">
    <property type="entry name" value="Ribosomal_L10"/>
    <property type="match status" value="1"/>
</dbReference>
<dbReference type="Gene3D" id="3.30.70.1730">
    <property type="match status" value="1"/>
</dbReference>
<dbReference type="Gene3D" id="6.10.250.2350">
    <property type="match status" value="1"/>
</dbReference>
<dbReference type="HAMAP" id="MF_00362">
    <property type="entry name" value="Ribosomal_uL10"/>
    <property type="match status" value="1"/>
</dbReference>
<dbReference type="InterPro" id="IPR001790">
    <property type="entry name" value="Ribosomal_uL10"/>
</dbReference>
<dbReference type="InterPro" id="IPR043141">
    <property type="entry name" value="Ribosomal_uL10-like_sf"/>
</dbReference>
<dbReference type="InterPro" id="IPR022973">
    <property type="entry name" value="Ribosomal_uL10_bac"/>
</dbReference>
<dbReference type="InterPro" id="IPR047865">
    <property type="entry name" value="Ribosomal_uL10_bac_type"/>
</dbReference>
<dbReference type="InterPro" id="IPR002363">
    <property type="entry name" value="Ribosomal_uL10_CS_bac"/>
</dbReference>
<dbReference type="NCBIfam" id="NF000955">
    <property type="entry name" value="PRK00099.1-1"/>
    <property type="match status" value="1"/>
</dbReference>
<dbReference type="PANTHER" id="PTHR11560">
    <property type="entry name" value="39S RIBOSOMAL PROTEIN L10, MITOCHONDRIAL"/>
    <property type="match status" value="1"/>
</dbReference>
<dbReference type="Pfam" id="PF00466">
    <property type="entry name" value="Ribosomal_L10"/>
    <property type="match status" value="1"/>
</dbReference>
<dbReference type="SUPFAM" id="SSF160369">
    <property type="entry name" value="Ribosomal protein L10-like"/>
    <property type="match status" value="1"/>
</dbReference>
<dbReference type="PROSITE" id="PS01109">
    <property type="entry name" value="RIBOSOMAL_L10"/>
    <property type="match status" value="1"/>
</dbReference>
<accession>P57148</accession>
<proteinExistence type="inferred from homology"/>
<sequence length="165" mass="18246">MALSIHDKKIIVSKINKISNTALSAVTADLQGVCVNKINELRKSGREVGVKMSIVQNTLLSLAIKNTVFECLKKKLKGSTFIAYSMIHPGSGARLFKEFSKKNTQFKITGAAFEGKLLSILEINQLADMPTYKEAIIKLLLTWKMLIAGKLIYTLSAIKQKKETS</sequence>
<comment type="function">
    <text evidence="1">Forms part of the ribosomal stalk, playing a central role in the interaction of the ribosome with GTP-bound translation factors.</text>
</comment>
<comment type="subunit">
    <text evidence="1">Part of the ribosomal stalk of the 50S ribosomal subunit. The N-terminus interacts with L11 and the large rRNA to form the base of the stalk. The C-terminus forms an elongated spine to which L12 dimers bind in a sequential fashion forming a multimeric L10(L12)X complex (By similarity).</text>
</comment>
<comment type="similarity">
    <text evidence="2">Belongs to the universal ribosomal protein uL10 family.</text>
</comment>
<feature type="chain" id="PRO_0000154602" description="Large ribosomal subunit protein uL10">
    <location>
        <begin position="1"/>
        <end position="165"/>
    </location>
</feature>
<keyword id="KW-1185">Reference proteome</keyword>
<keyword id="KW-0687">Ribonucleoprotein</keyword>
<keyword id="KW-0689">Ribosomal protein</keyword>
<keyword id="KW-0694">RNA-binding</keyword>
<keyword id="KW-0699">rRNA-binding</keyword>
<protein>
    <recommendedName>
        <fullName evidence="2">Large ribosomal subunit protein uL10</fullName>
    </recommendedName>
    <alternativeName>
        <fullName>50S ribosomal protein L10</fullName>
    </alternativeName>
</protein>
<reference key="1">
    <citation type="journal article" date="2000" name="Nature">
        <title>Genome sequence of the endocellular bacterial symbiont of aphids Buchnera sp. APS.</title>
        <authorList>
            <person name="Shigenobu S."/>
            <person name="Watanabe H."/>
            <person name="Hattori M."/>
            <person name="Sakaki Y."/>
            <person name="Ishikawa H."/>
        </authorList>
    </citation>
    <scope>NUCLEOTIDE SEQUENCE [LARGE SCALE GENOMIC DNA]</scope>
    <source>
        <strain>APS</strain>
    </source>
</reference>